<comment type="function">
    <text evidence="1">DNA ligase that catalyzes the formation of phosphodiester linkages between 5'-phosphoryl and 3'-hydroxyl groups in double-stranded DNA using NAD as a coenzyme and as the energy source for the reaction. It is essential for DNA replication and repair of damaged DNA.</text>
</comment>
<comment type="catalytic activity">
    <reaction evidence="1">
        <text>NAD(+) + (deoxyribonucleotide)n-3'-hydroxyl + 5'-phospho-(deoxyribonucleotide)m = (deoxyribonucleotide)n+m + AMP + beta-nicotinamide D-nucleotide.</text>
        <dbReference type="EC" id="6.5.1.2"/>
    </reaction>
</comment>
<comment type="cofactor">
    <cofactor evidence="1">
        <name>Mg(2+)</name>
        <dbReference type="ChEBI" id="CHEBI:18420"/>
    </cofactor>
    <cofactor evidence="1">
        <name>Mn(2+)</name>
        <dbReference type="ChEBI" id="CHEBI:29035"/>
    </cofactor>
</comment>
<comment type="similarity">
    <text evidence="1">Belongs to the NAD-dependent DNA ligase family. LigA subfamily.</text>
</comment>
<reference key="1">
    <citation type="journal article" date="2008" name="Genome Res.">
        <title>Chlamydia trachomatis: genome sequence analysis of lymphogranuloma venereum isolates.</title>
        <authorList>
            <person name="Thomson N.R."/>
            <person name="Holden M.T.G."/>
            <person name="Carder C."/>
            <person name="Lennard N."/>
            <person name="Lockey S.J."/>
            <person name="Marsh P."/>
            <person name="Skipp P."/>
            <person name="O'Connor C.D."/>
            <person name="Goodhead I."/>
            <person name="Norbertzcak H."/>
            <person name="Harris B."/>
            <person name="Ormond D."/>
            <person name="Rance R."/>
            <person name="Quail M.A."/>
            <person name="Parkhill J."/>
            <person name="Stephens R.S."/>
            <person name="Clarke I.N."/>
        </authorList>
    </citation>
    <scope>NUCLEOTIDE SEQUENCE [LARGE SCALE GENOMIC DNA]</scope>
    <source>
        <strain>UCH-1/proctitis</strain>
    </source>
</reference>
<feature type="chain" id="PRO_0000380338" description="DNA ligase">
    <location>
        <begin position="1"/>
        <end position="663"/>
    </location>
</feature>
<feature type="domain" description="BRCT" evidence="1">
    <location>
        <begin position="581"/>
        <end position="663"/>
    </location>
</feature>
<feature type="active site" description="N6-AMP-lysine intermediate" evidence="1">
    <location>
        <position position="114"/>
    </location>
</feature>
<feature type="binding site" evidence="1">
    <location>
        <begin position="33"/>
        <end position="37"/>
    </location>
    <ligand>
        <name>NAD(+)</name>
        <dbReference type="ChEBI" id="CHEBI:57540"/>
    </ligand>
</feature>
<feature type="binding site" evidence="1">
    <location>
        <begin position="82"/>
        <end position="83"/>
    </location>
    <ligand>
        <name>NAD(+)</name>
        <dbReference type="ChEBI" id="CHEBI:57540"/>
    </ligand>
</feature>
<feature type="binding site" evidence="1">
    <location>
        <position position="112"/>
    </location>
    <ligand>
        <name>NAD(+)</name>
        <dbReference type="ChEBI" id="CHEBI:57540"/>
    </ligand>
</feature>
<feature type="binding site" evidence="1">
    <location>
        <position position="135"/>
    </location>
    <ligand>
        <name>NAD(+)</name>
        <dbReference type="ChEBI" id="CHEBI:57540"/>
    </ligand>
</feature>
<feature type="binding site" evidence="1">
    <location>
        <position position="171"/>
    </location>
    <ligand>
        <name>NAD(+)</name>
        <dbReference type="ChEBI" id="CHEBI:57540"/>
    </ligand>
</feature>
<feature type="binding site" evidence="1">
    <location>
        <position position="285"/>
    </location>
    <ligand>
        <name>NAD(+)</name>
        <dbReference type="ChEBI" id="CHEBI:57540"/>
    </ligand>
</feature>
<feature type="binding site" evidence="1">
    <location>
        <position position="309"/>
    </location>
    <ligand>
        <name>NAD(+)</name>
        <dbReference type="ChEBI" id="CHEBI:57540"/>
    </ligand>
</feature>
<feature type="binding site" evidence="1">
    <location>
        <position position="403"/>
    </location>
    <ligand>
        <name>Zn(2+)</name>
        <dbReference type="ChEBI" id="CHEBI:29105"/>
    </ligand>
</feature>
<feature type="binding site" evidence="1">
    <location>
        <position position="406"/>
    </location>
    <ligand>
        <name>Zn(2+)</name>
        <dbReference type="ChEBI" id="CHEBI:29105"/>
    </ligand>
</feature>
<feature type="binding site" evidence="1">
    <location>
        <position position="419"/>
    </location>
    <ligand>
        <name>Zn(2+)</name>
        <dbReference type="ChEBI" id="CHEBI:29105"/>
    </ligand>
</feature>
<feature type="binding site" evidence="1">
    <location>
        <position position="424"/>
    </location>
    <ligand>
        <name>Zn(2+)</name>
        <dbReference type="ChEBI" id="CHEBI:29105"/>
    </ligand>
</feature>
<sequence>MGAVSRDDYIALCTELVEHDRRYYALNQPTISDYSYDMKMRELQEIEVQHPEWKVSWSPTMYLGDRPSGQFPVVPHSSPMLSIANVYSLQELEEFFSRTEKLLGYSPGYSLELKIDGIAVAIRYEKRLFAQALSRGNGVKGEDITANVSTIRSLPMRLPQEAPEDLEVRGEVFLSYEAFEELNACQREQGKLEFANPRNAAGGTLKLLSSKEAAKRKLDLSVYGLITDQKKRSHFENLQLCSQWGFFVAGMPKQCRSRQEVVERIREIEEMRAALPMAIDGVVIKVDNIAHQDRLGLTSKHYRWAIAYKYAPERAETILEDIVVQVGKTGILTPVAELAPVFLSGSRVSRASLYNQDEIEKKDIRIGDSVYVEKGGEVIPKIVGINLAKRSLESEPWKMPSLCPVCHEPVVKEKVSVRCINPLCSGGMLEKICFFASKSALNIDHLGEKVVTKLFEVGLISSCSDIFALTEEDLKQVPGFKDRSIQNLLASIAGAKKVALDRLLTALSIPFVGSSGAIALADHFGTLDKVIEASLDELMSIEGIGPKVAASIVAFFSKHENREEIRRMQELGVQVLSKQSDKEAPLQGKVFVLTGTLQQMTRTQAEERIRSLGGKVSSSVSKSTYAVIAGSEAGGKLKKAQDLGLSIWNESKLSRILDAKSVS</sequence>
<gene>
    <name evidence="1" type="primary">ligA</name>
    <name type="ordered locus">CTLon_0397</name>
</gene>
<evidence type="ECO:0000255" key="1">
    <source>
        <dbReference type="HAMAP-Rule" id="MF_01588"/>
    </source>
</evidence>
<organism>
    <name type="scientific">Chlamydia trachomatis serovar L2b (strain UCH-1/proctitis)</name>
    <dbReference type="NCBI Taxonomy" id="471473"/>
    <lineage>
        <taxon>Bacteria</taxon>
        <taxon>Pseudomonadati</taxon>
        <taxon>Chlamydiota</taxon>
        <taxon>Chlamydiia</taxon>
        <taxon>Chlamydiales</taxon>
        <taxon>Chlamydiaceae</taxon>
        <taxon>Chlamydia/Chlamydophila group</taxon>
        <taxon>Chlamydia</taxon>
    </lineage>
</organism>
<dbReference type="EC" id="6.5.1.2" evidence="1"/>
<dbReference type="EMBL" id="AM884177">
    <property type="protein sequence ID" value="CAP06795.1"/>
    <property type="molecule type" value="Genomic_DNA"/>
</dbReference>
<dbReference type="RefSeq" id="WP_009873594.1">
    <property type="nucleotide sequence ID" value="NC_010280.2"/>
</dbReference>
<dbReference type="SMR" id="B0BBD3"/>
<dbReference type="KEGG" id="ctl:CTLon_0397"/>
<dbReference type="HOGENOM" id="CLU_007764_2_1_0"/>
<dbReference type="Proteomes" id="UP001154401">
    <property type="component" value="Chromosome"/>
</dbReference>
<dbReference type="GO" id="GO:0005829">
    <property type="term" value="C:cytosol"/>
    <property type="evidence" value="ECO:0007669"/>
    <property type="project" value="TreeGrafter"/>
</dbReference>
<dbReference type="GO" id="GO:0003677">
    <property type="term" value="F:DNA binding"/>
    <property type="evidence" value="ECO:0007669"/>
    <property type="project" value="InterPro"/>
</dbReference>
<dbReference type="GO" id="GO:0003911">
    <property type="term" value="F:DNA ligase (NAD+) activity"/>
    <property type="evidence" value="ECO:0007669"/>
    <property type="project" value="UniProtKB-UniRule"/>
</dbReference>
<dbReference type="GO" id="GO:0046872">
    <property type="term" value="F:metal ion binding"/>
    <property type="evidence" value="ECO:0007669"/>
    <property type="project" value="UniProtKB-KW"/>
</dbReference>
<dbReference type="GO" id="GO:0006281">
    <property type="term" value="P:DNA repair"/>
    <property type="evidence" value="ECO:0007669"/>
    <property type="project" value="UniProtKB-KW"/>
</dbReference>
<dbReference type="GO" id="GO:0006260">
    <property type="term" value="P:DNA replication"/>
    <property type="evidence" value="ECO:0007669"/>
    <property type="project" value="UniProtKB-KW"/>
</dbReference>
<dbReference type="CDD" id="cd17748">
    <property type="entry name" value="BRCT_DNA_ligase_like"/>
    <property type="match status" value="1"/>
</dbReference>
<dbReference type="CDD" id="cd00114">
    <property type="entry name" value="LIGANc"/>
    <property type="match status" value="1"/>
</dbReference>
<dbReference type="FunFam" id="1.10.150.20:FF:000006">
    <property type="entry name" value="DNA ligase"/>
    <property type="match status" value="1"/>
</dbReference>
<dbReference type="FunFam" id="2.40.50.140:FF:000012">
    <property type="entry name" value="DNA ligase"/>
    <property type="match status" value="1"/>
</dbReference>
<dbReference type="FunFam" id="3.30.470.30:FF:000041">
    <property type="entry name" value="DNA ligase"/>
    <property type="match status" value="1"/>
</dbReference>
<dbReference type="Gene3D" id="6.20.10.30">
    <property type="match status" value="1"/>
</dbReference>
<dbReference type="Gene3D" id="1.10.150.20">
    <property type="entry name" value="5' to 3' exonuclease, C-terminal subdomain"/>
    <property type="match status" value="2"/>
</dbReference>
<dbReference type="Gene3D" id="3.40.50.10190">
    <property type="entry name" value="BRCT domain"/>
    <property type="match status" value="1"/>
</dbReference>
<dbReference type="Gene3D" id="3.30.470.30">
    <property type="entry name" value="DNA ligase/mRNA capping enzyme"/>
    <property type="match status" value="1"/>
</dbReference>
<dbReference type="Gene3D" id="1.10.287.610">
    <property type="entry name" value="Helix hairpin bin"/>
    <property type="match status" value="1"/>
</dbReference>
<dbReference type="Gene3D" id="2.40.50.140">
    <property type="entry name" value="Nucleic acid-binding proteins"/>
    <property type="match status" value="1"/>
</dbReference>
<dbReference type="HAMAP" id="MF_01588">
    <property type="entry name" value="DNA_ligase_A"/>
    <property type="match status" value="1"/>
</dbReference>
<dbReference type="InterPro" id="IPR001357">
    <property type="entry name" value="BRCT_dom"/>
</dbReference>
<dbReference type="InterPro" id="IPR036420">
    <property type="entry name" value="BRCT_dom_sf"/>
</dbReference>
<dbReference type="InterPro" id="IPR041663">
    <property type="entry name" value="DisA/LigA_HHH"/>
</dbReference>
<dbReference type="InterPro" id="IPR001679">
    <property type="entry name" value="DNA_ligase"/>
</dbReference>
<dbReference type="InterPro" id="IPR018239">
    <property type="entry name" value="DNA_ligase_AS"/>
</dbReference>
<dbReference type="InterPro" id="IPR033136">
    <property type="entry name" value="DNA_ligase_CS"/>
</dbReference>
<dbReference type="InterPro" id="IPR013839">
    <property type="entry name" value="DNAligase_adenylation"/>
</dbReference>
<dbReference type="InterPro" id="IPR013840">
    <property type="entry name" value="DNAligase_N"/>
</dbReference>
<dbReference type="InterPro" id="IPR003583">
    <property type="entry name" value="Hlx-hairpin-Hlx_DNA-bd_motif"/>
</dbReference>
<dbReference type="InterPro" id="IPR012340">
    <property type="entry name" value="NA-bd_OB-fold"/>
</dbReference>
<dbReference type="InterPro" id="IPR004150">
    <property type="entry name" value="NAD_DNA_ligase_OB"/>
</dbReference>
<dbReference type="InterPro" id="IPR010994">
    <property type="entry name" value="RuvA_2-like"/>
</dbReference>
<dbReference type="NCBIfam" id="TIGR00575">
    <property type="entry name" value="dnlj"/>
    <property type="match status" value="1"/>
</dbReference>
<dbReference type="NCBIfam" id="NF005932">
    <property type="entry name" value="PRK07956.1"/>
    <property type="match status" value="1"/>
</dbReference>
<dbReference type="PANTHER" id="PTHR23389">
    <property type="entry name" value="CHROMOSOME TRANSMISSION FIDELITY FACTOR 18"/>
    <property type="match status" value="1"/>
</dbReference>
<dbReference type="PANTHER" id="PTHR23389:SF9">
    <property type="entry name" value="DNA LIGASE"/>
    <property type="match status" value="1"/>
</dbReference>
<dbReference type="Pfam" id="PF00533">
    <property type="entry name" value="BRCT"/>
    <property type="match status" value="1"/>
</dbReference>
<dbReference type="Pfam" id="PF01653">
    <property type="entry name" value="DNA_ligase_aden"/>
    <property type="match status" value="1"/>
</dbReference>
<dbReference type="Pfam" id="PF03120">
    <property type="entry name" value="DNA_ligase_OB"/>
    <property type="match status" value="1"/>
</dbReference>
<dbReference type="Pfam" id="PF12826">
    <property type="entry name" value="HHH_2"/>
    <property type="match status" value="1"/>
</dbReference>
<dbReference type="Pfam" id="PF14520">
    <property type="entry name" value="HHH_5"/>
    <property type="match status" value="1"/>
</dbReference>
<dbReference type="PIRSF" id="PIRSF001604">
    <property type="entry name" value="LigA"/>
    <property type="match status" value="1"/>
</dbReference>
<dbReference type="SMART" id="SM00292">
    <property type="entry name" value="BRCT"/>
    <property type="match status" value="1"/>
</dbReference>
<dbReference type="SMART" id="SM00278">
    <property type="entry name" value="HhH1"/>
    <property type="match status" value="3"/>
</dbReference>
<dbReference type="SMART" id="SM00532">
    <property type="entry name" value="LIGANc"/>
    <property type="match status" value="1"/>
</dbReference>
<dbReference type="SUPFAM" id="SSF52113">
    <property type="entry name" value="BRCT domain"/>
    <property type="match status" value="1"/>
</dbReference>
<dbReference type="SUPFAM" id="SSF56091">
    <property type="entry name" value="DNA ligase/mRNA capping enzyme, catalytic domain"/>
    <property type="match status" value="1"/>
</dbReference>
<dbReference type="SUPFAM" id="SSF50249">
    <property type="entry name" value="Nucleic acid-binding proteins"/>
    <property type="match status" value="1"/>
</dbReference>
<dbReference type="SUPFAM" id="SSF47781">
    <property type="entry name" value="RuvA domain 2-like"/>
    <property type="match status" value="1"/>
</dbReference>
<dbReference type="PROSITE" id="PS50172">
    <property type="entry name" value="BRCT"/>
    <property type="match status" value="1"/>
</dbReference>
<dbReference type="PROSITE" id="PS01055">
    <property type="entry name" value="DNA_LIGASE_N1"/>
    <property type="match status" value="1"/>
</dbReference>
<dbReference type="PROSITE" id="PS01056">
    <property type="entry name" value="DNA_LIGASE_N2"/>
    <property type="match status" value="1"/>
</dbReference>
<protein>
    <recommendedName>
        <fullName evidence="1">DNA ligase</fullName>
        <ecNumber evidence="1">6.5.1.2</ecNumber>
    </recommendedName>
    <alternativeName>
        <fullName evidence="1">Polydeoxyribonucleotide synthase [NAD(+)]</fullName>
    </alternativeName>
</protein>
<proteinExistence type="inferred from homology"/>
<name>DNLJ_CHLTB</name>
<keyword id="KW-0227">DNA damage</keyword>
<keyword id="KW-0234">DNA repair</keyword>
<keyword id="KW-0235">DNA replication</keyword>
<keyword id="KW-0436">Ligase</keyword>
<keyword id="KW-0460">Magnesium</keyword>
<keyword id="KW-0464">Manganese</keyword>
<keyword id="KW-0479">Metal-binding</keyword>
<keyword id="KW-0520">NAD</keyword>
<keyword id="KW-0862">Zinc</keyword>
<accession>B0BBD3</accession>